<gene>
    <name type="primary">snu66</name>
    <name type="ORF">SPAC167.03c</name>
</gene>
<organism>
    <name type="scientific">Schizosaccharomyces pombe (strain 972 / ATCC 24843)</name>
    <name type="common">Fission yeast</name>
    <dbReference type="NCBI Taxonomy" id="284812"/>
    <lineage>
        <taxon>Eukaryota</taxon>
        <taxon>Fungi</taxon>
        <taxon>Dikarya</taxon>
        <taxon>Ascomycota</taxon>
        <taxon>Taphrinomycotina</taxon>
        <taxon>Schizosaccharomycetes</taxon>
        <taxon>Schizosaccharomycetales</taxon>
        <taxon>Schizosaccharomycetaceae</taxon>
        <taxon>Schizosaccharomyces</taxon>
    </lineage>
</organism>
<keyword id="KW-0175">Coiled coil</keyword>
<keyword id="KW-0507">mRNA processing</keyword>
<keyword id="KW-0508">mRNA splicing</keyword>
<keyword id="KW-0539">Nucleus</keyword>
<keyword id="KW-1185">Reference proteome</keyword>
<keyword id="KW-0833">Ubl conjugation pathway</keyword>
<protein>
    <recommendedName>
        <fullName>U4/U6.U5 tri-snRNP-associated protein snu66</fullName>
    </recommendedName>
</protein>
<reference key="1">
    <citation type="journal article" date="2002" name="Nature">
        <title>The genome sequence of Schizosaccharomyces pombe.</title>
        <authorList>
            <person name="Wood V."/>
            <person name="Gwilliam R."/>
            <person name="Rajandream M.A."/>
            <person name="Lyne M.H."/>
            <person name="Lyne R."/>
            <person name="Stewart A."/>
            <person name="Sgouros J.G."/>
            <person name="Peat N."/>
            <person name="Hayles J."/>
            <person name="Baker S.G."/>
            <person name="Basham D."/>
            <person name="Bowman S."/>
            <person name="Brooks K."/>
            <person name="Brown D."/>
            <person name="Brown S."/>
            <person name="Chillingworth T."/>
            <person name="Churcher C.M."/>
            <person name="Collins M."/>
            <person name="Connor R."/>
            <person name="Cronin A."/>
            <person name="Davis P."/>
            <person name="Feltwell T."/>
            <person name="Fraser A."/>
            <person name="Gentles S."/>
            <person name="Goble A."/>
            <person name="Hamlin N."/>
            <person name="Harris D.E."/>
            <person name="Hidalgo J."/>
            <person name="Hodgson G."/>
            <person name="Holroyd S."/>
            <person name="Hornsby T."/>
            <person name="Howarth S."/>
            <person name="Huckle E.J."/>
            <person name="Hunt S."/>
            <person name="Jagels K."/>
            <person name="James K.D."/>
            <person name="Jones L."/>
            <person name="Jones M."/>
            <person name="Leather S."/>
            <person name="McDonald S."/>
            <person name="McLean J."/>
            <person name="Mooney P."/>
            <person name="Moule S."/>
            <person name="Mungall K.L."/>
            <person name="Murphy L.D."/>
            <person name="Niblett D."/>
            <person name="Odell C."/>
            <person name="Oliver K."/>
            <person name="O'Neil S."/>
            <person name="Pearson D."/>
            <person name="Quail M.A."/>
            <person name="Rabbinowitsch E."/>
            <person name="Rutherford K.M."/>
            <person name="Rutter S."/>
            <person name="Saunders D."/>
            <person name="Seeger K."/>
            <person name="Sharp S."/>
            <person name="Skelton J."/>
            <person name="Simmonds M.N."/>
            <person name="Squares R."/>
            <person name="Squares S."/>
            <person name="Stevens K."/>
            <person name="Taylor K."/>
            <person name="Taylor R.G."/>
            <person name="Tivey A."/>
            <person name="Walsh S.V."/>
            <person name="Warren T."/>
            <person name="Whitehead S."/>
            <person name="Woodward J.R."/>
            <person name="Volckaert G."/>
            <person name="Aert R."/>
            <person name="Robben J."/>
            <person name="Grymonprez B."/>
            <person name="Weltjens I."/>
            <person name="Vanstreels E."/>
            <person name="Rieger M."/>
            <person name="Schaefer M."/>
            <person name="Mueller-Auer S."/>
            <person name="Gabel C."/>
            <person name="Fuchs M."/>
            <person name="Duesterhoeft A."/>
            <person name="Fritzc C."/>
            <person name="Holzer E."/>
            <person name="Moestl D."/>
            <person name="Hilbert H."/>
            <person name="Borzym K."/>
            <person name="Langer I."/>
            <person name="Beck A."/>
            <person name="Lehrach H."/>
            <person name="Reinhardt R."/>
            <person name="Pohl T.M."/>
            <person name="Eger P."/>
            <person name="Zimmermann W."/>
            <person name="Wedler H."/>
            <person name="Wambutt R."/>
            <person name="Purnelle B."/>
            <person name="Goffeau A."/>
            <person name="Cadieu E."/>
            <person name="Dreano S."/>
            <person name="Gloux S."/>
            <person name="Lelaure V."/>
            <person name="Mottier S."/>
            <person name="Galibert F."/>
            <person name="Aves S.J."/>
            <person name="Xiang Z."/>
            <person name="Hunt C."/>
            <person name="Moore K."/>
            <person name="Hurst S.M."/>
            <person name="Lucas M."/>
            <person name="Rochet M."/>
            <person name="Gaillardin C."/>
            <person name="Tallada V.A."/>
            <person name="Garzon A."/>
            <person name="Thode G."/>
            <person name="Daga R.R."/>
            <person name="Cruzado L."/>
            <person name="Jimenez J."/>
            <person name="Sanchez M."/>
            <person name="del Rey F."/>
            <person name="Benito J."/>
            <person name="Dominguez A."/>
            <person name="Revuelta J.L."/>
            <person name="Moreno S."/>
            <person name="Armstrong J."/>
            <person name="Forsburg S.L."/>
            <person name="Cerutti L."/>
            <person name="Lowe T."/>
            <person name="McCombie W.R."/>
            <person name="Paulsen I."/>
            <person name="Potashkin J."/>
            <person name="Shpakovski G.V."/>
            <person name="Ussery D."/>
            <person name="Barrell B.G."/>
            <person name="Nurse P."/>
        </authorList>
    </citation>
    <scope>NUCLEOTIDE SEQUENCE [LARGE SCALE GENOMIC DNA]</scope>
    <source>
        <strain>972 / ATCC 24843</strain>
    </source>
</reference>
<reference key="2">
    <citation type="journal article" date="2004" name="Curr. Biol.">
        <title>Ubiquitin-like protein Hub1 is required for pre-mRNA splicing and localization of an essential splicing factor in fission yeast.</title>
        <authorList>
            <person name="Wilkinson C.R.M."/>
            <person name="Dittmar G.A.G."/>
            <person name="Ohi M.D."/>
            <person name="Uetz P."/>
            <person name="Jones N."/>
            <person name="Finley D."/>
        </authorList>
    </citation>
    <scope>FUNCTION</scope>
    <scope>INTERACTION WITH HUB1</scope>
    <scope>SUBCELLULAR LOCATION</scope>
</reference>
<reference key="3">
    <citation type="journal article" date="2006" name="Nat. Biotechnol.">
        <title>ORFeome cloning and global analysis of protein localization in the fission yeast Schizosaccharomyces pombe.</title>
        <authorList>
            <person name="Matsuyama A."/>
            <person name="Arai R."/>
            <person name="Yashiroda Y."/>
            <person name="Shirai A."/>
            <person name="Kamata A."/>
            <person name="Sekido S."/>
            <person name="Kobayashi Y."/>
            <person name="Hashimoto A."/>
            <person name="Hamamoto M."/>
            <person name="Hiraoka Y."/>
            <person name="Horinouchi S."/>
            <person name="Yoshida M."/>
        </authorList>
    </citation>
    <scope>SUBCELLULAR LOCATION [LARGE SCALE ANALYSIS]</scope>
</reference>
<sequence length="649" mass="74734">MSGNSGASESISIEETNRIRISLGLKPLDISEEKPQKELSDASVKSSYVDQEQQAYENWKKQEQEEINRKKEEELKSKFEKLRQKNERRRRTQGKTLAETLAEEDDQIDANDTRAWILKMRNSSLNKNGNGLNFEAKNDAPRRSTLHSQNAGPNVNSSLEGMKIAHGFQDLNKNDGLVLTLKDADILDEDNHDLLENVEMVQRKTKNERKEDNPYKPYEDENDFLQQSEADQPSEDTFTTIGPQNSLTVNSTIEKHKSDNKKTFGTLVSFVEPTITGSEQSDYRQIKIKKSKKKKSKSDRRKRLVELDAENENENDPSDFVLPNGQSNSDLSVEQDSAIFKEQKKMKIQKRMRELETQSFADDDDLQQSIAMQRRLAQKRAKILKPEDVAEQLQNAEEVTDMTDSDTASGLIFDDTRAFVNSIKETENREALGSINEQAFEDSKDLNDTNSITGSSPTEESNALVEDTSVDISATLEEANTQQENAEDEPLVSDNVGAVLSLLRNKGVIKVSDEAKEKIQKEEEYNKWFARKQQARVELEEQRRKKKEQDRLSGKFEKMTQKEREQYAKKENERWDKKIAEIELEQFHDYKPQVDIKYVDEFGVELGPKEAYKYLLSHQFHGKGSGKAKTEKRLRRIVEKEREERKPIF</sequence>
<evidence type="ECO:0000255" key="1"/>
<evidence type="ECO:0000256" key="2">
    <source>
        <dbReference type="SAM" id="MobiDB-lite"/>
    </source>
</evidence>
<evidence type="ECO:0000269" key="3">
    <source>
    </source>
</evidence>
<evidence type="ECO:0000269" key="4">
    <source>
    </source>
</evidence>
<evidence type="ECO:0000305" key="5"/>
<accession>O94538</accession>
<proteinExistence type="evidence at protein level"/>
<feature type="chain" id="PRO_0000290651" description="U4/U6.U5 tri-snRNP-associated protein snu66">
    <location>
        <begin position="1"/>
        <end position="649"/>
    </location>
</feature>
<feature type="region of interest" description="Disordered" evidence="2">
    <location>
        <begin position="27"/>
        <end position="61"/>
    </location>
</feature>
<feature type="region of interest" description="Disordered" evidence="2">
    <location>
        <begin position="78"/>
        <end position="98"/>
    </location>
</feature>
<feature type="region of interest" description="Disordered" evidence="2">
    <location>
        <begin position="129"/>
        <end position="154"/>
    </location>
</feature>
<feature type="region of interest" description="Disordered" evidence="2">
    <location>
        <begin position="286"/>
        <end position="327"/>
    </location>
</feature>
<feature type="region of interest" description="Disordered" evidence="2">
    <location>
        <begin position="433"/>
        <end position="464"/>
    </location>
</feature>
<feature type="region of interest" description="Disordered" evidence="2">
    <location>
        <begin position="541"/>
        <end position="570"/>
    </location>
</feature>
<feature type="coiled-coil region" evidence="1">
    <location>
        <begin position="49"/>
        <end position="93"/>
    </location>
</feature>
<feature type="coiled-coil region" evidence="1">
    <location>
        <begin position="516"/>
        <end position="583"/>
    </location>
</feature>
<feature type="compositionally biased region" description="Basic and acidic residues" evidence="2">
    <location>
        <begin position="29"/>
        <end position="40"/>
    </location>
</feature>
<feature type="compositionally biased region" description="Polar residues" evidence="2">
    <location>
        <begin position="43"/>
        <end position="56"/>
    </location>
</feature>
<feature type="compositionally biased region" description="Basic residues" evidence="2">
    <location>
        <begin position="286"/>
        <end position="303"/>
    </location>
</feature>
<feature type="compositionally biased region" description="Acidic residues" evidence="2">
    <location>
        <begin position="307"/>
        <end position="317"/>
    </location>
</feature>
<feature type="compositionally biased region" description="Polar residues" evidence="2">
    <location>
        <begin position="448"/>
        <end position="461"/>
    </location>
</feature>
<comment type="function">
    <text evidence="3">Required for efficient splicing of pre-mRNA.</text>
</comment>
<comment type="subunit">
    <text evidence="3">Interacts with hub1.</text>
</comment>
<comment type="interaction">
    <interactant intactId="EBI-607744">
        <id>O94538</id>
    </interactant>
    <interactant intactId="EBI-607734">
        <id>O94650</id>
        <label>hub1</label>
    </interactant>
    <organismsDiffer>false</organismsDiffer>
    <experiments>2</experiments>
</comment>
<comment type="subcellular location">
    <subcellularLocation>
        <location evidence="3 4">Nucleus</location>
    </subcellularLocation>
</comment>
<comment type="similarity">
    <text evidence="5">Belongs to the SNU66/SART1 family.</text>
</comment>
<dbReference type="EMBL" id="CU329670">
    <property type="protein sequence ID" value="CAA22848.1"/>
    <property type="molecule type" value="Genomic_DNA"/>
</dbReference>
<dbReference type="PIR" id="T37740">
    <property type="entry name" value="T37740"/>
</dbReference>
<dbReference type="RefSeq" id="NP_593382.1">
    <property type="nucleotide sequence ID" value="NM_001018814.2"/>
</dbReference>
<dbReference type="SMR" id="O94538"/>
<dbReference type="BioGRID" id="279223">
    <property type="interactions" value="31"/>
</dbReference>
<dbReference type="FunCoup" id="O94538">
    <property type="interactions" value="836"/>
</dbReference>
<dbReference type="IntAct" id="O94538">
    <property type="interactions" value="2"/>
</dbReference>
<dbReference type="STRING" id="284812.O94538"/>
<dbReference type="iPTMnet" id="O94538"/>
<dbReference type="PaxDb" id="4896-SPAC167.03c.1"/>
<dbReference type="EnsemblFungi" id="SPAC167.03c.1">
    <property type="protein sequence ID" value="SPAC167.03c.1:pep"/>
    <property type="gene ID" value="SPAC167.03c"/>
</dbReference>
<dbReference type="GeneID" id="2542774"/>
<dbReference type="KEGG" id="spo:2542774"/>
<dbReference type="PomBase" id="SPAC167.03c">
    <property type="gene designation" value="snu66"/>
</dbReference>
<dbReference type="VEuPathDB" id="FungiDB:SPAC167.03c"/>
<dbReference type="eggNOG" id="KOG2217">
    <property type="taxonomic scope" value="Eukaryota"/>
</dbReference>
<dbReference type="HOGENOM" id="CLU_009379_2_0_1"/>
<dbReference type="InParanoid" id="O94538"/>
<dbReference type="OMA" id="KRRDYTG"/>
<dbReference type="PhylomeDB" id="O94538"/>
<dbReference type="PRO" id="PR:O94538"/>
<dbReference type="Proteomes" id="UP000002485">
    <property type="component" value="Chromosome I"/>
</dbReference>
<dbReference type="GO" id="GO:0005634">
    <property type="term" value="C:nucleus"/>
    <property type="evidence" value="ECO:0000314"/>
    <property type="project" value="PomBase"/>
</dbReference>
<dbReference type="GO" id="GO:0005681">
    <property type="term" value="C:spliceosomal complex"/>
    <property type="evidence" value="ECO:0000305"/>
    <property type="project" value="PomBase"/>
</dbReference>
<dbReference type="GO" id="GO:0046540">
    <property type="term" value="C:U4/U6 x U5 tri-snRNP complex"/>
    <property type="evidence" value="ECO:0000314"/>
    <property type="project" value="PomBase"/>
</dbReference>
<dbReference type="GO" id="GO:0000481">
    <property type="term" value="P:maturation of 5S rRNA"/>
    <property type="evidence" value="ECO:0000318"/>
    <property type="project" value="GO_Central"/>
</dbReference>
<dbReference type="GO" id="GO:0045292">
    <property type="term" value="P:mRNA cis splicing, via spliceosome"/>
    <property type="evidence" value="ECO:0000315"/>
    <property type="project" value="PomBase"/>
</dbReference>
<dbReference type="InterPro" id="IPR045347">
    <property type="entry name" value="HIND"/>
</dbReference>
<dbReference type="InterPro" id="IPR005011">
    <property type="entry name" value="SNU66/SART1"/>
</dbReference>
<dbReference type="PANTHER" id="PTHR14152">
    <property type="entry name" value="SQUAMOUS CELL CARCINOMA ANTIGEN RECOGNISED BY CYTOTOXIC T LYMPHOCYTES"/>
    <property type="match status" value="1"/>
</dbReference>
<dbReference type="PANTHER" id="PTHR14152:SF5">
    <property type="entry name" value="U4_U6.U5 TRI-SNRNP-ASSOCIATED PROTEIN 1"/>
    <property type="match status" value="1"/>
</dbReference>
<dbReference type="Pfam" id="PF19252">
    <property type="entry name" value="HIND"/>
    <property type="match status" value="1"/>
</dbReference>
<dbReference type="Pfam" id="PF03343">
    <property type="entry name" value="SART-1"/>
    <property type="match status" value="1"/>
</dbReference>
<name>SNU66_SCHPO</name>